<feature type="chain" id="PRO_0000392562" description="Probable galacturonosyltransferase 12">
    <location>
        <begin position="1"/>
        <end position="535"/>
    </location>
</feature>
<feature type="topological domain" description="Cytoplasmic" evidence="1">
    <location>
        <begin position="1"/>
        <end position="37"/>
    </location>
</feature>
<feature type="transmembrane region" description="Helical; Signal-anchor for type II membrane protein" evidence="1">
    <location>
        <begin position="38"/>
        <end position="58"/>
    </location>
</feature>
<feature type="topological domain" description="Lumenal" evidence="1">
    <location>
        <begin position="59"/>
        <end position="535"/>
    </location>
</feature>
<feature type="glycosylation site" description="N-linked (GlcNAc...) asparagine" evidence="1">
    <location>
        <position position="397"/>
    </location>
</feature>
<feature type="glycosylation site" description="N-linked (GlcNAc...) asparagine" evidence="1">
    <location>
        <position position="430"/>
    </location>
</feature>
<name>GAUTC_ARATH</name>
<keyword id="KW-0961">Cell wall biogenesis/degradation</keyword>
<keyword id="KW-0325">Glycoprotein</keyword>
<keyword id="KW-0328">Glycosyltransferase</keyword>
<keyword id="KW-0333">Golgi apparatus</keyword>
<keyword id="KW-0472">Membrane</keyword>
<keyword id="KW-1185">Reference proteome</keyword>
<keyword id="KW-0735">Signal-anchor</keyword>
<keyword id="KW-0808">Transferase</keyword>
<keyword id="KW-0812">Transmembrane</keyword>
<keyword id="KW-1133">Transmembrane helix</keyword>
<dbReference type="EC" id="2.4.1.-"/>
<dbReference type="EMBL" id="AB022214">
    <property type="protein sequence ID" value="BAB09935.1"/>
    <property type="molecule type" value="Genomic_DNA"/>
</dbReference>
<dbReference type="EMBL" id="CP002688">
    <property type="protein sequence ID" value="AED96527.1"/>
    <property type="molecule type" value="Genomic_DNA"/>
</dbReference>
<dbReference type="EMBL" id="BT023729">
    <property type="protein sequence ID" value="AAZ23921.1"/>
    <property type="molecule type" value="mRNA"/>
</dbReference>
<dbReference type="EMBL" id="AK229580">
    <property type="protein sequence ID" value="BAF01430.1"/>
    <property type="molecule type" value="mRNA"/>
</dbReference>
<dbReference type="RefSeq" id="NP_200280.1">
    <property type="nucleotide sequence ID" value="NM_124850.4"/>
</dbReference>
<dbReference type="SMR" id="Q9FH36"/>
<dbReference type="FunCoup" id="Q9FH36">
    <property type="interactions" value="74"/>
</dbReference>
<dbReference type="STRING" id="3702.Q9FH36"/>
<dbReference type="CAZy" id="GT8">
    <property type="family name" value="Glycosyltransferase Family 8"/>
</dbReference>
<dbReference type="GlyCosmos" id="Q9FH36">
    <property type="glycosylation" value="2 sites, No reported glycans"/>
</dbReference>
<dbReference type="GlyGen" id="Q9FH36">
    <property type="glycosylation" value="2 sites"/>
</dbReference>
<dbReference type="iPTMnet" id="Q9FH36"/>
<dbReference type="PaxDb" id="3702-AT5G54690.1"/>
<dbReference type="ProteomicsDB" id="221907"/>
<dbReference type="EnsemblPlants" id="AT5G54690.1">
    <property type="protein sequence ID" value="AT5G54690.1"/>
    <property type="gene ID" value="AT5G54690"/>
</dbReference>
<dbReference type="GeneID" id="835558"/>
<dbReference type="Gramene" id="AT5G54690.1">
    <property type="protein sequence ID" value="AT5G54690.1"/>
    <property type="gene ID" value="AT5G54690"/>
</dbReference>
<dbReference type="KEGG" id="ath:AT5G54690"/>
<dbReference type="Araport" id="AT5G54690"/>
<dbReference type="TAIR" id="AT5G54690">
    <property type="gene designation" value="GAUT12"/>
</dbReference>
<dbReference type="eggNOG" id="ENOG502QTN8">
    <property type="taxonomic scope" value="Eukaryota"/>
</dbReference>
<dbReference type="HOGENOM" id="CLU_010770_5_1_1"/>
<dbReference type="InParanoid" id="Q9FH36"/>
<dbReference type="OMA" id="HEHSTNS"/>
<dbReference type="OrthoDB" id="411524at2759"/>
<dbReference type="PhylomeDB" id="Q9FH36"/>
<dbReference type="UniPathway" id="UPA00845"/>
<dbReference type="PRO" id="PR:Q9FH36"/>
<dbReference type="Proteomes" id="UP000006548">
    <property type="component" value="Chromosome 5"/>
</dbReference>
<dbReference type="ExpressionAtlas" id="Q9FH36">
    <property type="expression patterns" value="baseline and differential"/>
</dbReference>
<dbReference type="GO" id="GO:0005794">
    <property type="term" value="C:Golgi apparatus"/>
    <property type="evidence" value="ECO:0000314"/>
    <property type="project" value="TAIR"/>
</dbReference>
<dbReference type="GO" id="GO:0000139">
    <property type="term" value="C:Golgi membrane"/>
    <property type="evidence" value="ECO:0007669"/>
    <property type="project" value="UniProtKB-SubCell"/>
</dbReference>
<dbReference type="GO" id="GO:0047262">
    <property type="term" value="F:polygalacturonate 4-alpha-galacturonosyltransferase activity"/>
    <property type="evidence" value="ECO:0000250"/>
    <property type="project" value="TAIR"/>
</dbReference>
<dbReference type="GO" id="GO:0071555">
    <property type="term" value="P:cell wall organization"/>
    <property type="evidence" value="ECO:0000315"/>
    <property type="project" value="TAIR"/>
</dbReference>
<dbReference type="GO" id="GO:0010417">
    <property type="term" value="P:glucuronoxylan biosynthetic process"/>
    <property type="evidence" value="ECO:0000315"/>
    <property type="project" value="TAIR"/>
</dbReference>
<dbReference type="GO" id="GO:0010413">
    <property type="term" value="P:glucuronoxylan metabolic process"/>
    <property type="evidence" value="ECO:0000315"/>
    <property type="project" value="TAIR"/>
</dbReference>
<dbReference type="GO" id="GO:0045489">
    <property type="term" value="P:pectin biosynthetic process"/>
    <property type="evidence" value="ECO:0007669"/>
    <property type="project" value="UniProtKB-UniPathway"/>
</dbReference>
<dbReference type="GO" id="GO:0045492">
    <property type="term" value="P:xylan biosynthetic process"/>
    <property type="evidence" value="ECO:0000304"/>
    <property type="project" value="TAIR"/>
</dbReference>
<dbReference type="CDD" id="cd06429">
    <property type="entry name" value="GT8_like_1"/>
    <property type="match status" value="1"/>
</dbReference>
<dbReference type="Gene3D" id="3.90.550.10">
    <property type="entry name" value="Spore Coat Polysaccharide Biosynthesis Protein SpsA, Chain A"/>
    <property type="match status" value="1"/>
</dbReference>
<dbReference type="InterPro" id="IPR029993">
    <property type="entry name" value="GAUT"/>
</dbReference>
<dbReference type="InterPro" id="IPR002495">
    <property type="entry name" value="Glyco_trans_8"/>
</dbReference>
<dbReference type="InterPro" id="IPR029044">
    <property type="entry name" value="Nucleotide-diphossugar_trans"/>
</dbReference>
<dbReference type="PANTHER" id="PTHR32116:SF63">
    <property type="entry name" value="GALACTURONOSYLTRANSFERASE 12-RELATED"/>
    <property type="match status" value="1"/>
</dbReference>
<dbReference type="PANTHER" id="PTHR32116">
    <property type="entry name" value="GALACTURONOSYLTRANSFERASE 4-RELATED"/>
    <property type="match status" value="1"/>
</dbReference>
<dbReference type="Pfam" id="PF01501">
    <property type="entry name" value="Glyco_transf_8"/>
    <property type="match status" value="1"/>
</dbReference>
<dbReference type="SUPFAM" id="SSF53448">
    <property type="entry name" value="Nucleotide-diphospho-sugar transferases"/>
    <property type="match status" value="1"/>
</dbReference>
<protein>
    <recommendedName>
        <fullName>Probable galacturonosyltransferase 12</fullName>
        <ecNumber>2.4.1.-</ecNumber>
    </recommendedName>
    <alternativeName>
        <fullName>Like glycosyl transferase 6</fullName>
    </alternativeName>
    <alternativeName>
        <fullName>Protein IRREGULAR XYLEM 8</fullName>
    </alternativeName>
</protein>
<sequence>MQLHISPSLRHVTVVTGKGLREFIKVKVGSRRFSYQMVFYSLLFFTFLLRFVFVLSTVDTIDGDPSPCSSLACLGKRLKPKLLGRRVDSGNVPEAMYQVLEQPLSEQELKGRSDIPQTLQDFMSEVKRSKSDAREFAQKLKEMVTLMEQRTRTAKIQEYLYRHVASSSIPKQLHCLALKLANEHSINAAARLQLPEAELVPMLVDNNYFHFVLASDNILAASVVAKSLVQNALRPHKIVLHIITDRKTYFPMQAWFSLHPLSPAIIEVKALHHFDWLSKGKVPVLEAMEKDQRVRSQFRGGSSVIVANNKENPVVVAAKLQALSPKYNSLMNHIRIHLPELFPSLNKVVFLDDDIVIQTDLSPLWDIDMNGKVNGAVETCRGEDKFVMSKKFKSYLNFSNPTIAKNFNPEECAWAYGMNVFDLAAWRRTNISSTYYHWLDENLKSDLSLWQLGTLPPGLIAFHGHVQTIDPFWHMLGLGYQETTSYADAESAAVVHFNGRAKPWLDIAFPHLRPLWAKYLDSSDRFIKSCHIRAS</sequence>
<accession>Q9FH36</accession>
<evidence type="ECO:0000255" key="1"/>
<evidence type="ECO:0000269" key="2">
    <source>
    </source>
</evidence>
<evidence type="ECO:0000269" key="3">
    <source>
    </source>
</evidence>
<evidence type="ECO:0000269" key="4">
    <source>
    </source>
</evidence>
<evidence type="ECO:0000269" key="5">
    <source>
    </source>
</evidence>
<evidence type="ECO:0000269" key="6">
    <source>
    </source>
</evidence>
<evidence type="ECO:0000305" key="7"/>
<reference key="1">
    <citation type="journal article" date="2000" name="DNA Res.">
        <title>Structural analysis of Arabidopsis thaliana chromosome 5. X. Sequence features of the regions of 3,076,755 bp covered by sixty P1 and TAC clones.</title>
        <authorList>
            <person name="Sato S."/>
            <person name="Nakamura Y."/>
            <person name="Kaneko T."/>
            <person name="Katoh T."/>
            <person name="Asamizu E."/>
            <person name="Kotani H."/>
            <person name="Tabata S."/>
        </authorList>
    </citation>
    <scope>NUCLEOTIDE SEQUENCE [LARGE SCALE GENOMIC DNA]</scope>
    <source>
        <strain>cv. Columbia</strain>
    </source>
</reference>
<reference key="2">
    <citation type="journal article" date="2017" name="Plant J.">
        <title>Araport11: a complete reannotation of the Arabidopsis thaliana reference genome.</title>
        <authorList>
            <person name="Cheng C.Y."/>
            <person name="Krishnakumar V."/>
            <person name="Chan A.P."/>
            <person name="Thibaud-Nissen F."/>
            <person name="Schobel S."/>
            <person name="Town C.D."/>
        </authorList>
    </citation>
    <scope>GENOME REANNOTATION</scope>
    <source>
        <strain>cv. Columbia</strain>
    </source>
</reference>
<reference key="3">
    <citation type="submission" date="2005-07" db="EMBL/GenBank/DDBJ databases">
        <title>Arabidopsis ORF clones.</title>
        <authorList>
            <person name="Cheuk R."/>
            <person name="Chen H."/>
            <person name="Kim C.J."/>
            <person name="Shinn P."/>
            <person name="Ecker J.R."/>
        </authorList>
    </citation>
    <scope>NUCLEOTIDE SEQUENCE [LARGE SCALE MRNA]</scope>
</reference>
<reference key="4">
    <citation type="submission" date="2006-07" db="EMBL/GenBank/DDBJ databases">
        <title>Large-scale analysis of RIKEN Arabidopsis full-length (RAFL) cDNAs.</title>
        <authorList>
            <person name="Totoki Y."/>
            <person name="Seki M."/>
            <person name="Ishida J."/>
            <person name="Nakajima M."/>
            <person name="Enju A."/>
            <person name="Kamiya A."/>
            <person name="Narusaka M."/>
            <person name="Shin-i T."/>
            <person name="Nakagawa M."/>
            <person name="Sakamoto N."/>
            <person name="Oishi K."/>
            <person name="Kohara Y."/>
            <person name="Kobayashi M."/>
            <person name="Toyoda A."/>
            <person name="Sakaki Y."/>
            <person name="Sakurai T."/>
            <person name="Iida K."/>
            <person name="Akiyama K."/>
            <person name="Satou M."/>
            <person name="Toyoda T."/>
            <person name="Konagaya A."/>
            <person name="Carninci P."/>
            <person name="Kawai J."/>
            <person name="Hayashizaki Y."/>
            <person name="Shinozaki K."/>
        </authorList>
    </citation>
    <scope>NUCLEOTIDE SEQUENCE [LARGE SCALE MRNA]</scope>
    <source>
        <strain>cv. Columbia</strain>
    </source>
</reference>
<reference key="5">
    <citation type="journal article" date="2000" name="Plant Mol. Biol.">
        <title>Organization and structural evolution of four multigene families in Arabidopsis thaliana: AtLCAD, AtLGT, AtMYST and AtHD-GL2.</title>
        <authorList>
            <person name="Tavares R."/>
            <person name="Aubourg S."/>
            <person name="Lecharny A."/>
            <person name="Kreis M."/>
        </authorList>
    </citation>
    <scope>GENE FAMILY</scope>
    <scope>NOMENCLATURE</scope>
</reference>
<reference key="6">
    <citation type="journal article" date="2005" name="Plant Cell">
        <title>Identification of novel genes in Arabidopsis involved in secondary cell wall formation using expression profiling and reverse genetics.</title>
        <authorList>
            <person name="Brown D.M."/>
            <person name="Zeef L.A.H."/>
            <person name="Ellis J."/>
            <person name="Goodacre R."/>
            <person name="Turner S.R."/>
        </authorList>
    </citation>
    <scope>FUNCTION</scope>
    <scope>DISRUPTION PHENOTYPE</scope>
</reference>
<reference key="7">
    <citation type="journal article" date="2006" name="Proc. Natl. Acad. Sci. U.S.A.">
        <title>Functional identification of an Arabidopsis pectin biosynthetic homogalacturonan galacturonosyltransferase.</title>
        <authorList>
            <person name="Sterling J.D."/>
            <person name="Atmodjo M.A."/>
            <person name="Inwood S.E."/>
            <person name="Kumar Kolli V.S."/>
            <person name="Quigley H.F."/>
            <person name="Hahn M.G."/>
            <person name="Mohnen D."/>
        </authorList>
    </citation>
    <scope>GENE FAMILY</scope>
    <scope>NOMENCLATURE</scope>
</reference>
<reference key="8">
    <citation type="journal article" date="2007" name="Plant Cell">
        <title>The Arabidopsis irregular xylem8 mutant is deficient in glucuronoxylan and homogalacturonan, which are essential for secondary cell wall integrity.</title>
        <authorList>
            <person name="Persson S."/>
            <person name="Caffall K.H."/>
            <person name="Freshour G."/>
            <person name="Hilley M.T."/>
            <person name="Bauer S."/>
            <person name="Poindexter P."/>
            <person name="Hahn M.G."/>
            <person name="Mohnen D."/>
            <person name="Somerville C."/>
        </authorList>
    </citation>
    <scope>FUNCTION</scope>
    <scope>TISSUE SPECIFICITY</scope>
    <scope>DISRUPTION PHENOTYPE</scope>
</reference>
<reference key="9">
    <citation type="journal article" date="2007" name="Plant Cell">
        <title>Arabidopsis irregular xylem8 and irregular xylem9: implications for the complexity of glucuronoxylan biosynthesis.</title>
        <authorList>
            <person name="Pena M.J."/>
            <person name="Zhong R."/>
            <person name="Zhou G.K."/>
            <person name="Richardson E.A."/>
            <person name="O'Neill M.A."/>
            <person name="Darvill A.G."/>
            <person name="York W.S."/>
            <person name="Ye Z.H."/>
        </authorList>
    </citation>
    <scope>FUNCTION</scope>
    <scope>TISSUE SPECIFICITY</scope>
    <scope>SUBCELLULAR LOCATION</scope>
    <scope>DISRUPTION PHENOTYPE</scope>
</reference>
<reference key="10">
    <citation type="journal article" date="2007" name="Plant J.">
        <title>Comparison of five xylan synthesis mutants reveals new insight into the mechanisms of xylan synthesis.</title>
        <authorList>
            <person name="Brown D.M."/>
            <person name="Goubet F."/>
            <person name="Wong V.W."/>
            <person name="Goodacre R."/>
            <person name="Stephens E."/>
            <person name="Dupree P."/>
            <person name="Turner S.R."/>
        </authorList>
    </citation>
    <scope>FUNCTION</scope>
    <scope>TISSUE SPECIFICITY</scope>
    <scope>DISRUPTION PHENOTYPE</scope>
</reference>
<reference key="11">
    <citation type="journal article" date="2009" name="Mol. Plant">
        <title>Arabidopsis thaliana T-DNA mutants implicate GAUT genes in the biosynthesis of pectin and xylan in cell walls and seed testa.</title>
        <authorList>
            <person name="Caffall K.H."/>
            <person name="Pattathil S."/>
            <person name="Phillips S.E."/>
            <person name="Hahn M.G."/>
            <person name="Mohnen D."/>
        </authorList>
    </citation>
    <scope>TISSUE SPECIFICITY</scope>
    <scope>DISRUPTION PHENOTYPE</scope>
</reference>
<gene>
    <name type="primary">GAUT12</name>
    <name type="synonym">IRX8</name>
    <name type="synonym">LGT6</name>
    <name type="ordered locus">At5g54690</name>
    <name type="ORF">K5F14.3</name>
</gene>
<organism>
    <name type="scientific">Arabidopsis thaliana</name>
    <name type="common">Mouse-ear cress</name>
    <dbReference type="NCBI Taxonomy" id="3702"/>
    <lineage>
        <taxon>Eukaryota</taxon>
        <taxon>Viridiplantae</taxon>
        <taxon>Streptophyta</taxon>
        <taxon>Embryophyta</taxon>
        <taxon>Tracheophyta</taxon>
        <taxon>Spermatophyta</taxon>
        <taxon>Magnoliopsida</taxon>
        <taxon>eudicotyledons</taxon>
        <taxon>Gunneridae</taxon>
        <taxon>Pentapetalae</taxon>
        <taxon>rosids</taxon>
        <taxon>malvids</taxon>
        <taxon>Brassicales</taxon>
        <taxon>Brassicaceae</taxon>
        <taxon>Camelineae</taxon>
        <taxon>Arabidopsis</taxon>
    </lineage>
</organism>
<comment type="function">
    <text evidence="2 3 4 5">Involved in pectin assembly and/or distribution, and in the synthesis of secondary wall glucuronoxylan. Probably involved in the synthesis of the glycosyl sequence at the glucuronoxylan reducing end. May be involved in synthesis of a complex glycan primer for xylan synthesis.</text>
</comment>
<comment type="pathway">
    <text>Glycan metabolism; pectin biosynthesis.</text>
</comment>
<comment type="subcellular location">
    <subcellularLocation>
        <location evidence="4">Golgi apparatus membrane</location>
        <topology evidence="4">Single-pass type II membrane protein</topology>
    </subcellularLocation>
</comment>
<comment type="tissue specificity">
    <text evidence="3 4 5 6">Highly expressed in stems. Detected in roots, inflorescences, siliques, and leaves. Expressed in cells undergoing secondary wall thickening, including interfascicular fibers and primary and secondary xylem.</text>
</comment>
<comment type="disruption phenotype">
    <text evidence="2 3 4 5 6">Severe dwarfing and seedling lethality. Collapsed xylem vessels. Reduced glucuronoxylan and homogalacturonan content in cell wall.</text>
</comment>
<comment type="similarity">
    <text evidence="7">Belongs to the glycosyltransferase 8 family.</text>
</comment>
<proteinExistence type="evidence at transcript level"/>